<evidence type="ECO:0000255" key="1">
    <source>
        <dbReference type="HAMAP-Rule" id="MF_00361"/>
    </source>
</evidence>
<organism>
    <name type="scientific">Geobacillus kaustophilus (strain HTA426)</name>
    <dbReference type="NCBI Taxonomy" id="235909"/>
    <lineage>
        <taxon>Bacteria</taxon>
        <taxon>Bacillati</taxon>
        <taxon>Bacillota</taxon>
        <taxon>Bacilli</taxon>
        <taxon>Bacillales</taxon>
        <taxon>Anoxybacillaceae</taxon>
        <taxon>Geobacillus</taxon>
        <taxon>Geobacillus thermoleovorans group</taxon>
    </lineage>
</organism>
<protein>
    <recommendedName>
        <fullName evidence="1">NAD kinase 1</fullName>
        <ecNumber evidence="1">2.7.1.23</ecNumber>
    </recommendedName>
    <alternativeName>
        <fullName evidence="1">ATP-dependent NAD kinase 1</fullName>
    </alternativeName>
</protein>
<accession>Q5L1R5</accession>
<comment type="function">
    <text evidence="1">Involved in the regulation of the intracellular balance of NAD and NADP, and is a key enzyme in the biosynthesis of NADP. Catalyzes specifically the phosphorylation on 2'-hydroxyl of the adenosine moiety of NAD to yield NADP.</text>
</comment>
<comment type="catalytic activity">
    <reaction evidence="1">
        <text>NAD(+) + ATP = ADP + NADP(+) + H(+)</text>
        <dbReference type="Rhea" id="RHEA:18629"/>
        <dbReference type="ChEBI" id="CHEBI:15378"/>
        <dbReference type="ChEBI" id="CHEBI:30616"/>
        <dbReference type="ChEBI" id="CHEBI:57540"/>
        <dbReference type="ChEBI" id="CHEBI:58349"/>
        <dbReference type="ChEBI" id="CHEBI:456216"/>
        <dbReference type="EC" id="2.7.1.23"/>
    </reaction>
</comment>
<comment type="cofactor">
    <cofactor evidence="1">
        <name>a divalent metal cation</name>
        <dbReference type="ChEBI" id="CHEBI:60240"/>
    </cofactor>
</comment>
<comment type="subcellular location">
    <subcellularLocation>
        <location evidence="1">Cytoplasm</location>
    </subcellularLocation>
</comment>
<comment type="similarity">
    <text evidence="1">Belongs to the NAD kinase family.</text>
</comment>
<dbReference type="EC" id="2.7.1.23" evidence="1"/>
<dbReference type="EMBL" id="BA000043">
    <property type="protein sequence ID" value="BAD75115.1"/>
    <property type="molecule type" value="Genomic_DNA"/>
</dbReference>
<dbReference type="RefSeq" id="WP_011230331.1">
    <property type="nucleotide sequence ID" value="NC_006510.1"/>
</dbReference>
<dbReference type="SMR" id="Q5L1R5"/>
<dbReference type="STRING" id="235909.GK0830"/>
<dbReference type="KEGG" id="gka:GK0830"/>
<dbReference type="eggNOG" id="COG0061">
    <property type="taxonomic scope" value="Bacteria"/>
</dbReference>
<dbReference type="HOGENOM" id="CLU_008831_0_3_9"/>
<dbReference type="Proteomes" id="UP000001172">
    <property type="component" value="Chromosome"/>
</dbReference>
<dbReference type="GO" id="GO:0005737">
    <property type="term" value="C:cytoplasm"/>
    <property type="evidence" value="ECO:0007669"/>
    <property type="project" value="UniProtKB-SubCell"/>
</dbReference>
<dbReference type="GO" id="GO:0005524">
    <property type="term" value="F:ATP binding"/>
    <property type="evidence" value="ECO:0007669"/>
    <property type="project" value="UniProtKB-KW"/>
</dbReference>
<dbReference type="GO" id="GO:0046872">
    <property type="term" value="F:metal ion binding"/>
    <property type="evidence" value="ECO:0007669"/>
    <property type="project" value="UniProtKB-UniRule"/>
</dbReference>
<dbReference type="GO" id="GO:0051287">
    <property type="term" value="F:NAD binding"/>
    <property type="evidence" value="ECO:0007669"/>
    <property type="project" value="UniProtKB-ARBA"/>
</dbReference>
<dbReference type="GO" id="GO:0003951">
    <property type="term" value="F:NAD+ kinase activity"/>
    <property type="evidence" value="ECO:0007669"/>
    <property type="project" value="UniProtKB-UniRule"/>
</dbReference>
<dbReference type="GO" id="GO:0019674">
    <property type="term" value="P:NAD metabolic process"/>
    <property type="evidence" value="ECO:0007669"/>
    <property type="project" value="InterPro"/>
</dbReference>
<dbReference type="GO" id="GO:0006741">
    <property type="term" value="P:NADP biosynthetic process"/>
    <property type="evidence" value="ECO:0007669"/>
    <property type="project" value="UniProtKB-UniRule"/>
</dbReference>
<dbReference type="FunFam" id="2.60.200.30:FF:000002">
    <property type="entry name" value="NAD kinase"/>
    <property type="match status" value="1"/>
</dbReference>
<dbReference type="Gene3D" id="3.40.50.10330">
    <property type="entry name" value="Probable inorganic polyphosphate/atp-NAD kinase, domain 1"/>
    <property type="match status" value="1"/>
</dbReference>
<dbReference type="Gene3D" id="2.60.200.30">
    <property type="entry name" value="Probable inorganic polyphosphate/atp-NAD kinase, domain 2"/>
    <property type="match status" value="1"/>
</dbReference>
<dbReference type="HAMAP" id="MF_00361">
    <property type="entry name" value="NAD_kinase"/>
    <property type="match status" value="1"/>
</dbReference>
<dbReference type="InterPro" id="IPR017438">
    <property type="entry name" value="ATP-NAD_kinase_N"/>
</dbReference>
<dbReference type="InterPro" id="IPR017437">
    <property type="entry name" value="ATP-NAD_kinase_PpnK-typ_C"/>
</dbReference>
<dbReference type="InterPro" id="IPR016064">
    <property type="entry name" value="NAD/diacylglycerol_kinase_sf"/>
</dbReference>
<dbReference type="InterPro" id="IPR002504">
    <property type="entry name" value="NADK"/>
</dbReference>
<dbReference type="NCBIfam" id="NF003424">
    <property type="entry name" value="PRK04885.1"/>
    <property type="match status" value="1"/>
</dbReference>
<dbReference type="PANTHER" id="PTHR20275">
    <property type="entry name" value="NAD KINASE"/>
    <property type="match status" value="1"/>
</dbReference>
<dbReference type="PANTHER" id="PTHR20275:SF0">
    <property type="entry name" value="NAD KINASE"/>
    <property type="match status" value="1"/>
</dbReference>
<dbReference type="Pfam" id="PF01513">
    <property type="entry name" value="NAD_kinase"/>
    <property type="match status" value="1"/>
</dbReference>
<dbReference type="Pfam" id="PF20143">
    <property type="entry name" value="NAD_kinase_C"/>
    <property type="match status" value="1"/>
</dbReference>
<dbReference type="SUPFAM" id="SSF111331">
    <property type="entry name" value="NAD kinase/diacylglycerol kinase-like"/>
    <property type="match status" value="1"/>
</dbReference>
<feature type="chain" id="PRO_0000229637" description="NAD kinase 1">
    <location>
        <begin position="1"/>
        <end position="271"/>
    </location>
</feature>
<feature type="active site" description="Proton acceptor" evidence="1">
    <location>
        <position position="52"/>
    </location>
</feature>
<feature type="binding site" evidence="1">
    <location>
        <begin position="52"/>
        <end position="53"/>
    </location>
    <ligand>
        <name>NAD(+)</name>
        <dbReference type="ChEBI" id="CHEBI:57540"/>
    </ligand>
</feature>
<feature type="binding site" evidence="1">
    <location>
        <begin position="129"/>
        <end position="130"/>
    </location>
    <ligand>
        <name>NAD(+)</name>
        <dbReference type="ChEBI" id="CHEBI:57540"/>
    </ligand>
</feature>
<feature type="binding site" evidence="1">
    <location>
        <position position="155"/>
    </location>
    <ligand>
        <name>NAD(+)</name>
        <dbReference type="ChEBI" id="CHEBI:57540"/>
    </ligand>
</feature>
<feature type="binding site" evidence="1">
    <location>
        <position position="157"/>
    </location>
    <ligand>
        <name>NAD(+)</name>
        <dbReference type="ChEBI" id="CHEBI:57540"/>
    </ligand>
</feature>
<feature type="binding site" evidence="1">
    <location>
        <position position="192"/>
    </location>
    <ligand>
        <name>NAD(+)</name>
        <dbReference type="ChEBI" id="CHEBI:57540"/>
    </ligand>
</feature>
<gene>
    <name evidence="1" type="primary">nadK1</name>
    <name type="ordered locus">GK0830</name>
</gene>
<reference key="1">
    <citation type="journal article" date="2004" name="Nucleic Acids Res.">
        <title>Thermoadaptation trait revealed by the genome sequence of thermophilic Geobacillus kaustophilus.</title>
        <authorList>
            <person name="Takami H."/>
            <person name="Takaki Y."/>
            <person name="Chee G.-J."/>
            <person name="Nishi S."/>
            <person name="Shimamura S."/>
            <person name="Suzuki H."/>
            <person name="Matsui S."/>
            <person name="Uchiyama I."/>
        </authorList>
    </citation>
    <scope>NUCLEOTIDE SEQUENCE [LARGE SCALE GENOMIC DNA]</scope>
    <source>
        <strain>HTA426</strain>
    </source>
</reference>
<sequence length="271" mass="30517">MKRTDAPLVFAITSKGDDISNALAQKMKTYLLDFDLRYDEEEPDLVISVGGDGTLLYAFHRYCHRLDKTAFVGVHTGHLGFYADWVPEELEKLVIAIAKTPYQVVEYPLLEVTIRYLNGGSEAKYLALNECTVKCVSGTLVMDVEIRGDLFERFRGDGLCISTPTGSTAYNKALGGAILHPSLEAIQVTEMASINNRVFRTIGSPLVLPAHHTCLLKPVNHVDFQITIDHLSLLHKEVKSIQCRVADEKVRFARFRPFPFWRRVRDSFIAD</sequence>
<proteinExistence type="inferred from homology"/>
<keyword id="KW-0067">ATP-binding</keyword>
<keyword id="KW-0963">Cytoplasm</keyword>
<keyword id="KW-0418">Kinase</keyword>
<keyword id="KW-0520">NAD</keyword>
<keyword id="KW-0521">NADP</keyword>
<keyword id="KW-0547">Nucleotide-binding</keyword>
<keyword id="KW-1185">Reference proteome</keyword>
<keyword id="KW-0808">Transferase</keyword>
<name>NADK1_GEOKA</name>